<proteinExistence type="evidence at protein level"/>
<protein>
    <recommendedName>
        <fullName>Axin-2</fullName>
    </recommendedName>
    <alternativeName>
        <fullName>Axin-like protein</fullName>
        <shortName>Axil</shortName>
    </alternativeName>
    <alternativeName>
        <fullName>Axis inhibition protein 2</fullName>
    </alternativeName>
    <alternativeName>
        <fullName>Conductin</fullName>
    </alternativeName>
</protein>
<organism>
    <name type="scientific">Rattus norvegicus</name>
    <name type="common">Rat</name>
    <dbReference type="NCBI Taxonomy" id="10116"/>
    <lineage>
        <taxon>Eukaryota</taxon>
        <taxon>Metazoa</taxon>
        <taxon>Chordata</taxon>
        <taxon>Craniata</taxon>
        <taxon>Vertebrata</taxon>
        <taxon>Euteleostomi</taxon>
        <taxon>Mammalia</taxon>
        <taxon>Eutheria</taxon>
        <taxon>Euarchontoglires</taxon>
        <taxon>Glires</taxon>
        <taxon>Rodentia</taxon>
        <taxon>Myomorpha</taxon>
        <taxon>Muroidea</taxon>
        <taxon>Muridae</taxon>
        <taxon>Murinae</taxon>
        <taxon>Rattus</taxon>
    </lineage>
</organism>
<feature type="chain" id="PRO_0000220897" description="Axin-2">
    <location>
        <begin position="1"/>
        <end position="838"/>
    </location>
</feature>
<feature type="domain" description="RGS" evidence="5">
    <location>
        <begin position="81"/>
        <end position="200"/>
    </location>
</feature>
<feature type="domain" description="DIX" evidence="4">
    <location>
        <begin position="756"/>
        <end position="838"/>
    </location>
</feature>
<feature type="region of interest" description="Disordered" evidence="6">
    <location>
        <begin position="1"/>
        <end position="75"/>
    </location>
</feature>
<feature type="region of interest" description="Disordered" evidence="6">
    <location>
        <begin position="300"/>
        <end position="333"/>
    </location>
</feature>
<feature type="region of interest" description="Interaction with GSK3B" evidence="1">
    <location>
        <begin position="327"/>
        <end position="413"/>
    </location>
</feature>
<feature type="region of interest" description="Disordered" evidence="6">
    <location>
        <begin position="398"/>
        <end position="435"/>
    </location>
</feature>
<feature type="region of interest" description="Interaction with beta-catenin" evidence="1">
    <location>
        <begin position="413"/>
        <end position="476"/>
    </location>
</feature>
<feature type="region of interest" description="Disordered" evidence="6">
    <location>
        <begin position="450"/>
        <end position="483"/>
    </location>
</feature>
<feature type="region of interest" description="Disordered" evidence="6">
    <location>
        <begin position="568"/>
        <end position="682"/>
    </location>
</feature>
<feature type="region of interest" description="Disordered" evidence="6">
    <location>
        <begin position="712"/>
        <end position="744"/>
    </location>
</feature>
<feature type="short sequence motif" description="Tankyrase-binding motif">
    <location>
        <begin position="21"/>
        <end position="30"/>
    </location>
</feature>
<feature type="compositionally biased region" description="Polar residues" evidence="6">
    <location>
        <begin position="42"/>
        <end position="55"/>
    </location>
</feature>
<feature type="compositionally biased region" description="Basic and acidic residues" evidence="6">
    <location>
        <begin position="56"/>
        <end position="69"/>
    </location>
</feature>
<feature type="compositionally biased region" description="Low complexity" evidence="6">
    <location>
        <begin position="303"/>
        <end position="318"/>
    </location>
</feature>
<feature type="compositionally biased region" description="Polar residues" evidence="6">
    <location>
        <begin position="727"/>
        <end position="737"/>
    </location>
</feature>
<keyword id="KW-0013">ADP-ribosylation</keyword>
<keyword id="KW-0963">Cytoplasm</keyword>
<keyword id="KW-0217">Developmental protein</keyword>
<keyword id="KW-0597">Phosphoprotein</keyword>
<keyword id="KW-1185">Reference proteome</keyword>
<keyword id="KW-0832">Ubl conjugation</keyword>
<keyword id="KW-0879">Wnt signaling pathway</keyword>
<sequence>MSSAVLVTLLPDPSSSFREDAPRPPVPGEEGETPPCQPSVGKVQSTKPMPVSSNARRNEDGLGEPEGRASPDSPLTRWTKSLHSLLGDQDGAYLFRTFLEREKCVDTLDFWFACNGFRQMNLKDTKTLRVAKAIYKRYIENNSVVSKQLKPATKTYIRDGIKKQQIGSVMFDQAQTEIQAVMEENAYQVFLTSDIYLEYVRSGGENTAYMSNGGLGSLKVLCGYLPTLNEEEEWTCADLKCKLSPTVVGLSSKTLRATASVRSTETAENGFRSFKRSEPVNPYHVGSGYVFAPATSANDSELSSDALTDDSMSMTDSSVDGIPPYRMGSKKQLQREMHRSVKANGQVSLPHFPRTHRLPKEMTPVEPAAFAAELISRLEKLKLELESRHSLEERLQQIREDEEKEGSEQALSSRDGAPVQHPLALLPSGSYEEDPQTILDDHLSRVLKTPGCQSPGVGRYSPRSRSPDHHHHHHQQCHALLPTGGKLPPEAACPLLGGKSFLTKQTTKHVHHHYIHHHAVPKTKEEIEAEATQRVRCLCPGGTDYYCYSKCKSHSKPPEPLPGEQFCGSRGGTLPKRNTKGTEPGLALPAREGGMSSAAGAPQLPGEEGDRSQDVWQWMLESERQSKSKPHSTQSIRKSYPLESARAPPGERVSRHHLLGASGHPRSAARAHPFTQDPAMPPLTPPNTLAQLEEACRRLAEVSKPQKQRCCVASQQRDRNHPATGQAGPTSFSNPSLASEDHKEPKRLASVHALQASELIVTYFFCGEEIPYRRMLKAQSLTLGHFKEQLSKKGNYRYYFKKASDEFACGAVFEEIWDDETVLPMYEGRILGKVERID</sequence>
<reference key="1">
    <citation type="journal article" date="1998" name="Mol. Cell. Biol.">
        <title>Axil, a member of the Axin family, interacts with both glycogen synthase kinase 3beta and beta-catenin and inhibits axis formation of Xenopus embryos.</title>
        <authorList>
            <person name="Yamamoto H."/>
            <person name="Kishida S."/>
            <person name="Uochi T."/>
            <person name="Ikeda S."/>
            <person name="Koyama S."/>
            <person name="Asashima M."/>
            <person name="Kikuchi A."/>
        </authorList>
    </citation>
    <scope>NUCLEOTIDE SEQUENCE [MRNA]</scope>
    <scope>INTERACTION WITH CTNNB1 AND GSK3B</scope>
    <scope>TISSUE SPECIFICITY</scope>
    <source>
        <tissue>Brain</tissue>
    </source>
</reference>
<name>AXIN2_RAT</name>
<accession>O70240</accession>
<comment type="function">
    <text evidence="2">Inhibitor of the Wnt signaling pathway. Down-regulates beta-catenin. Probably facilitate the phosphorylation of beta-catenin and APC by GSK3B.</text>
</comment>
<comment type="subunit">
    <text evidence="3 7">Interacts with SMAD7 and RNF111. Interacts with ANKRD6 (By similarity). Interacts with glycogen synthase kinase-3 beta (GSK3B) and beta-catenin (PubMed:9566905). The interaction between axin and beta-catenin occurs via the armadillo repeats contained in beta-catenin (PubMed:9566905). Interacts with SIAH1 (By similarity). Interacts with SIAH2 (By similarity).</text>
</comment>
<comment type="subcellular location">
    <subcellularLocation>
        <location evidence="3">Cytoplasm</location>
    </subcellularLocation>
</comment>
<comment type="tissue specificity">
    <text evidence="7">Expressed in lung and thymus.</text>
</comment>
<comment type="domain">
    <text evidence="1">The tankyrase-binding motif (also named TBD) is required for interaction with tankyrase TNKS and TNKS2.</text>
</comment>
<comment type="PTM">
    <text evidence="3">ADP-ribosylated by tankyrase TNKS and TNKS2. Poly-ADP-ribosylated protein is recognized by RNF146, followed by ubiquitination and subsequent activation of the Wnt signaling pathway.</text>
</comment>
<comment type="PTM">
    <text evidence="3">Ubiquitinated by RNF146 when poly-ADP-ribosylated, leading to its degradation and subsequent activation of the Wnt signaling pathway. Deubiquitinated by USP34, deubiquitinated downstream of beta-catenin stabilization step: deubiquitination is important Wnt signaling to positively regulate beta-catenin (CTNBB1)-mediated transcription.</text>
</comment>
<comment type="PTM">
    <text evidence="2">Probably phosphorylated by GSK3B and dephosphorylated by PP2A.</text>
</comment>
<dbReference type="EMBL" id="AF017757">
    <property type="protein sequence ID" value="AAC40089.1"/>
    <property type="molecule type" value="mRNA"/>
</dbReference>
<dbReference type="PIR" id="T08423">
    <property type="entry name" value="T08423"/>
</dbReference>
<dbReference type="RefSeq" id="NP_077331.1">
    <property type="nucleotide sequence ID" value="NM_024355.1"/>
</dbReference>
<dbReference type="RefSeq" id="XP_038941628.1">
    <property type="nucleotide sequence ID" value="XM_039085700.2"/>
</dbReference>
<dbReference type="RefSeq" id="XP_038941629.1">
    <property type="nucleotide sequence ID" value="XM_039085701.2"/>
</dbReference>
<dbReference type="RefSeq" id="XP_038941630.1">
    <property type="nucleotide sequence ID" value="XM_039085702.2"/>
</dbReference>
<dbReference type="RefSeq" id="XP_038941631.1">
    <property type="nucleotide sequence ID" value="XM_039085703.2"/>
</dbReference>
<dbReference type="RefSeq" id="XP_038941632.1">
    <property type="nucleotide sequence ID" value="XM_039085704.2"/>
</dbReference>
<dbReference type="RefSeq" id="XP_038941633.1">
    <property type="nucleotide sequence ID" value="XM_039085705.2"/>
</dbReference>
<dbReference type="SMR" id="O70240"/>
<dbReference type="FunCoup" id="O70240">
    <property type="interactions" value="2042"/>
</dbReference>
<dbReference type="STRING" id="10116.ENSRNOP00000073088"/>
<dbReference type="PhosphoSitePlus" id="O70240"/>
<dbReference type="PaxDb" id="10116-ENSRNOP00000004898"/>
<dbReference type="Ensembl" id="ENSRNOT00000088599.2">
    <property type="protein sequence ID" value="ENSRNOP00000073088.2"/>
    <property type="gene ID" value="ENSRNOG00000055010.2"/>
</dbReference>
<dbReference type="GeneID" id="29134"/>
<dbReference type="KEGG" id="rno:29134"/>
<dbReference type="AGR" id="RGD:69259"/>
<dbReference type="CTD" id="8313"/>
<dbReference type="RGD" id="69259">
    <property type="gene designation" value="Axin2"/>
</dbReference>
<dbReference type="eggNOG" id="KOG3589">
    <property type="taxonomic scope" value="Eukaryota"/>
</dbReference>
<dbReference type="GeneTree" id="ENSGT00940000157338"/>
<dbReference type="InParanoid" id="O70240"/>
<dbReference type="OMA" id="TEPCLAL"/>
<dbReference type="OrthoDB" id="10007451at2759"/>
<dbReference type="PhylomeDB" id="O70240"/>
<dbReference type="TreeFam" id="TF315454"/>
<dbReference type="Reactome" id="R-RNO-201681">
    <property type="pathway name" value="TCF dependent signaling in response to WNT"/>
</dbReference>
<dbReference type="Reactome" id="R-RNO-4641257">
    <property type="pathway name" value="Degradation of AXIN"/>
</dbReference>
<dbReference type="Reactome" id="R-RNO-5689880">
    <property type="pathway name" value="Ub-specific processing proteases"/>
</dbReference>
<dbReference type="PRO" id="PR:O70240"/>
<dbReference type="Proteomes" id="UP000002494">
    <property type="component" value="Chromosome 10"/>
</dbReference>
<dbReference type="GO" id="GO:0030877">
    <property type="term" value="C:beta-catenin destruction complex"/>
    <property type="evidence" value="ECO:0000318"/>
    <property type="project" value="GO_Central"/>
</dbReference>
<dbReference type="GO" id="GO:0005813">
    <property type="term" value="C:centrosome"/>
    <property type="evidence" value="ECO:0000266"/>
    <property type="project" value="RGD"/>
</dbReference>
<dbReference type="GO" id="GO:0005737">
    <property type="term" value="C:cytoplasm"/>
    <property type="evidence" value="ECO:0000266"/>
    <property type="project" value="RGD"/>
</dbReference>
<dbReference type="GO" id="GO:0005634">
    <property type="term" value="C:nucleus"/>
    <property type="evidence" value="ECO:0000266"/>
    <property type="project" value="RGD"/>
</dbReference>
<dbReference type="GO" id="GO:0005886">
    <property type="term" value="C:plasma membrane"/>
    <property type="evidence" value="ECO:0000318"/>
    <property type="project" value="GO_Central"/>
</dbReference>
<dbReference type="GO" id="GO:0032991">
    <property type="term" value="C:protein-containing complex"/>
    <property type="evidence" value="ECO:0000314"/>
    <property type="project" value="RGD"/>
</dbReference>
<dbReference type="GO" id="GO:0008013">
    <property type="term" value="F:beta-catenin binding"/>
    <property type="evidence" value="ECO:0000314"/>
    <property type="project" value="RGD"/>
</dbReference>
<dbReference type="GO" id="GO:0019899">
    <property type="term" value="F:enzyme binding"/>
    <property type="evidence" value="ECO:0000266"/>
    <property type="project" value="RGD"/>
</dbReference>
<dbReference type="GO" id="GO:0070411">
    <property type="term" value="F:I-SMAD binding"/>
    <property type="evidence" value="ECO:0000266"/>
    <property type="project" value="RGD"/>
</dbReference>
<dbReference type="GO" id="GO:0060090">
    <property type="term" value="F:molecular adaptor activity"/>
    <property type="evidence" value="ECO:0000318"/>
    <property type="project" value="GO_Central"/>
</dbReference>
<dbReference type="GO" id="GO:0019901">
    <property type="term" value="F:protein kinase binding"/>
    <property type="evidence" value="ECO:0000353"/>
    <property type="project" value="RGD"/>
</dbReference>
<dbReference type="GO" id="GO:0031625">
    <property type="term" value="F:ubiquitin protein ligase binding"/>
    <property type="evidence" value="ECO:0000266"/>
    <property type="project" value="RGD"/>
</dbReference>
<dbReference type="GO" id="GO:0003180">
    <property type="term" value="P:aortic valve morphogenesis"/>
    <property type="evidence" value="ECO:0000266"/>
    <property type="project" value="RGD"/>
</dbReference>
<dbReference type="GO" id="GO:0030282">
    <property type="term" value="P:bone mineralization"/>
    <property type="evidence" value="ECO:0000266"/>
    <property type="project" value="RGD"/>
</dbReference>
<dbReference type="GO" id="GO:0060070">
    <property type="term" value="P:canonical Wnt signaling pathway"/>
    <property type="evidence" value="ECO:0000266"/>
    <property type="project" value="RGD"/>
</dbReference>
<dbReference type="GO" id="GO:0048468">
    <property type="term" value="P:cell development"/>
    <property type="evidence" value="ECO:0000318"/>
    <property type="project" value="GO_Central"/>
</dbReference>
<dbReference type="GO" id="GO:0008283">
    <property type="term" value="P:cell population proliferation"/>
    <property type="evidence" value="ECO:0000266"/>
    <property type="project" value="RGD"/>
</dbReference>
<dbReference type="GO" id="GO:0071549">
    <property type="term" value="P:cellular response to dexamethasone stimulus"/>
    <property type="evidence" value="ECO:0000270"/>
    <property type="project" value="RGD"/>
</dbReference>
<dbReference type="GO" id="GO:0003413">
    <property type="term" value="P:chondrocyte differentiation involved in endochondral bone morphogenesis"/>
    <property type="evidence" value="ECO:0000266"/>
    <property type="project" value="RGD"/>
</dbReference>
<dbReference type="GO" id="GO:0009950">
    <property type="term" value="P:dorsal/ventral axis specification"/>
    <property type="evidence" value="ECO:0000314"/>
    <property type="project" value="RGD"/>
</dbReference>
<dbReference type="GO" id="GO:0001957">
    <property type="term" value="P:intramembranous ossification"/>
    <property type="evidence" value="ECO:0000266"/>
    <property type="project" value="RGD"/>
</dbReference>
<dbReference type="GO" id="GO:0043570">
    <property type="term" value="P:maintenance of DNA repeat elements"/>
    <property type="evidence" value="ECO:0000266"/>
    <property type="project" value="RGD"/>
</dbReference>
<dbReference type="GO" id="GO:0003183">
    <property type="term" value="P:mitral valve morphogenesis"/>
    <property type="evidence" value="ECO:0000266"/>
    <property type="project" value="RGD"/>
</dbReference>
<dbReference type="GO" id="GO:0048255">
    <property type="term" value="P:mRNA stabilization"/>
    <property type="evidence" value="ECO:0000266"/>
    <property type="project" value="RGD"/>
</dbReference>
<dbReference type="GO" id="GO:0090090">
    <property type="term" value="P:negative regulation of canonical Wnt signaling pathway"/>
    <property type="evidence" value="ECO:0000266"/>
    <property type="project" value="RGD"/>
</dbReference>
<dbReference type="GO" id="GO:0008285">
    <property type="term" value="P:negative regulation of cell population proliferation"/>
    <property type="evidence" value="ECO:0000314"/>
    <property type="project" value="RGD"/>
</dbReference>
<dbReference type="GO" id="GO:0045668">
    <property type="term" value="P:negative regulation of osteoblast differentiation"/>
    <property type="evidence" value="ECO:0000266"/>
    <property type="project" value="RGD"/>
</dbReference>
<dbReference type="GO" id="GO:0033689">
    <property type="term" value="P:negative regulation of osteoblast proliferation"/>
    <property type="evidence" value="ECO:0000266"/>
    <property type="project" value="RGD"/>
</dbReference>
<dbReference type="GO" id="GO:0030178">
    <property type="term" value="P:negative regulation of Wnt signaling pathway"/>
    <property type="evidence" value="ECO:0000314"/>
    <property type="project" value="RGD"/>
</dbReference>
<dbReference type="GO" id="GO:0042476">
    <property type="term" value="P:odontogenesis"/>
    <property type="evidence" value="ECO:0000266"/>
    <property type="project" value="RGD"/>
</dbReference>
<dbReference type="GO" id="GO:0001649">
    <property type="term" value="P:osteoblast differentiation"/>
    <property type="evidence" value="ECO:0000266"/>
    <property type="project" value="RGD"/>
</dbReference>
<dbReference type="GO" id="GO:0033687">
    <property type="term" value="P:osteoblast proliferation"/>
    <property type="evidence" value="ECO:0000266"/>
    <property type="project" value="RGD"/>
</dbReference>
<dbReference type="GO" id="GO:0010718">
    <property type="term" value="P:positive regulation of epithelial to mesenchymal transition"/>
    <property type="evidence" value="ECO:0000266"/>
    <property type="project" value="RGD"/>
</dbReference>
<dbReference type="GO" id="GO:0045600">
    <property type="term" value="P:positive regulation of fat cell differentiation"/>
    <property type="evidence" value="ECO:0000315"/>
    <property type="project" value="RGD"/>
</dbReference>
<dbReference type="GO" id="GO:0032436">
    <property type="term" value="P:positive regulation of proteasomal ubiquitin-dependent protein catabolic process"/>
    <property type="evidence" value="ECO:0000318"/>
    <property type="project" value="GO_Central"/>
</dbReference>
<dbReference type="GO" id="GO:0008104">
    <property type="term" value="P:protein localization"/>
    <property type="evidence" value="ECO:0000266"/>
    <property type="project" value="RGD"/>
</dbReference>
<dbReference type="GO" id="GO:0070602">
    <property type="term" value="P:regulation of centromeric sister chromatid cohesion"/>
    <property type="evidence" value="ECO:0000266"/>
    <property type="project" value="RGD"/>
</dbReference>
<dbReference type="GO" id="GO:0061181">
    <property type="term" value="P:regulation of chondrocyte development"/>
    <property type="evidence" value="ECO:0000266"/>
    <property type="project" value="RGD"/>
</dbReference>
<dbReference type="GO" id="GO:1903053">
    <property type="term" value="P:regulation of extracellular matrix organization"/>
    <property type="evidence" value="ECO:0000266"/>
    <property type="project" value="RGD"/>
</dbReference>
<dbReference type="GO" id="GO:0032423">
    <property type="term" value="P:regulation of mismatch repair"/>
    <property type="evidence" value="ECO:0000266"/>
    <property type="project" value="RGD"/>
</dbReference>
<dbReference type="GO" id="GO:0030111">
    <property type="term" value="P:regulation of Wnt signaling pathway"/>
    <property type="evidence" value="ECO:0000266"/>
    <property type="project" value="RGD"/>
</dbReference>
<dbReference type="GO" id="GO:0048545">
    <property type="term" value="P:response to steroid hormone"/>
    <property type="evidence" value="ECO:0000270"/>
    <property type="project" value="RGD"/>
</dbReference>
<dbReference type="GO" id="GO:0003139">
    <property type="term" value="P:secondary heart field specification"/>
    <property type="evidence" value="ECO:0000266"/>
    <property type="project" value="RGD"/>
</dbReference>
<dbReference type="GO" id="GO:0001756">
    <property type="term" value="P:somitogenesis"/>
    <property type="evidence" value="ECO:0000266"/>
    <property type="project" value="RGD"/>
</dbReference>
<dbReference type="GO" id="GO:0072089">
    <property type="term" value="P:stem cell proliferation"/>
    <property type="evidence" value="ECO:0000266"/>
    <property type="project" value="RGD"/>
</dbReference>
<dbReference type="CDD" id="cd11582">
    <property type="entry name" value="Axin_TNKS_binding"/>
    <property type="match status" value="1"/>
</dbReference>
<dbReference type="CDD" id="cd08707">
    <property type="entry name" value="RGS_Axin"/>
    <property type="match status" value="1"/>
</dbReference>
<dbReference type="FunFam" id="1.10.167.10:FF:000003">
    <property type="entry name" value="Axin 1"/>
    <property type="match status" value="1"/>
</dbReference>
<dbReference type="FunFam" id="1.10.196.10:FF:000002">
    <property type="entry name" value="Axin 1"/>
    <property type="match status" value="1"/>
</dbReference>
<dbReference type="FunFam" id="2.40.240.130:FF:000002">
    <property type="entry name" value="Axin 1"/>
    <property type="match status" value="1"/>
</dbReference>
<dbReference type="Gene3D" id="1.10.196.10">
    <property type="match status" value="1"/>
</dbReference>
<dbReference type="Gene3D" id="2.40.240.130">
    <property type="match status" value="1"/>
</dbReference>
<dbReference type="Gene3D" id="1.10.167.10">
    <property type="entry name" value="Regulator of G-protein Signalling 4, domain 2"/>
    <property type="match status" value="1"/>
</dbReference>
<dbReference type="InterPro" id="IPR043581">
    <property type="entry name" value="Axin-like"/>
</dbReference>
<dbReference type="InterPro" id="IPR014936">
    <property type="entry name" value="Axin_b-cat-bd"/>
</dbReference>
<dbReference type="InterPro" id="IPR032101">
    <property type="entry name" value="Axin_TNKS-bd"/>
</dbReference>
<dbReference type="InterPro" id="IPR001158">
    <property type="entry name" value="DIX"/>
</dbReference>
<dbReference type="InterPro" id="IPR038207">
    <property type="entry name" value="DIX_dom_sf"/>
</dbReference>
<dbReference type="InterPro" id="IPR016137">
    <property type="entry name" value="RGS"/>
</dbReference>
<dbReference type="InterPro" id="IPR036305">
    <property type="entry name" value="RGS_sf"/>
</dbReference>
<dbReference type="InterPro" id="IPR024066">
    <property type="entry name" value="RGS_subdom1/3"/>
</dbReference>
<dbReference type="InterPro" id="IPR044926">
    <property type="entry name" value="RGS_subdomain_2"/>
</dbReference>
<dbReference type="InterPro" id="IPR029071">
    <property type="entry name" value="Ubiquitin-like_domsf"/>
</dbReference>
<dbReference type="PANTHER" id="PTHR46102">
    <property type="entry name" value="AXIN"/>
    <property type="match status" value="1"/>
</dbReference>
<dbReference type="PANTHER" id="PTHR46102:SF1">
    <property type="entry name" value="AXIN-2"/>
    <property type="match status" value="1"/>
</dbReference>
<dbReference type="Pfam" id="PF16646">
    <property type="entry name" value="AXIN1_TNKS_BD"/>
    <property type="match status" value="1"/>
</dbReference>
<dbReference type="Pfam" id="PF08833">
    <property type="entry name" value="Axin_b-cat_bind"/>
    <property type="match status" value="1"/>
</dbReference>
<dbReference type="Pfam" id="PF00778">
    <property type="entry name" value="DIX"/>
    <property type="match status" value="1"/>
</dbReference>
<dbReference type="Pfam" id="PF00615">
    <property type="entry name" value="RGS"/>
    <property type="match status" value="1"/>
</dbReference>
<dbReference type="PRINTS" id="PR01301">
    <property type="entry name" value="RGSPROTEIN"/>
</dbReference>
<dbReference type="SMART" id="SM00021">
    <property type="entry name" value="DAX"/>
    <property type="match status" value="1"/>
</dbReference>
<dbReference type="SMART" id="SM00315">
    <property type="entry name" value="RGS"/>
    <property type="match status" value="1"/>
</dbReference>
<dbReference type="SUPFAM" id="SSF48097">
    <property type="entry name" value="Regulator of G-protein signaling, RGS"/>
    <property type="match status" value="1"/>
</dbReference>
<dbReference type="SUPFAM" id="SSF54236">
    <property type="entry name" value="Ubiquitin-like"/>
    <property type="match status" value="1"/>
</dbReference>
<dbReference type="PROSITE" id="PS50841">
    <property type="entry name" value="DIX"/>
    <property type="match status" value="1"/>
</dbReference>
<dbReference type="PROSITE" id="PS50132">
    <property type="entry name" value="RGS"/>
    <property type="match status" value="1"/>
</dbReference>
<evidence type="ECO:0000250" key="1"/>
<evidence type="ECO:0000250" key="2">
    <source>
        <dbReference type="UniProtKB" id="O15169"/>
    </source>
</evidence>
<evidence type="ECO:0000250" key="3">
    <source>
        <dbReference type="UniProtKB" id="Q9Y2T1"/>
    </source>
</evidence>
<evidence type="ECO:0000255" key="4">
    <source>
        <dbReference type="PROSITE-ProRule" id="PRU00069"/>
    </source>
</evidence>
<evidence type="ECO:0000255" key="5">
    <source>
        <dbReference type="PROSITE-ProRule" id="PRU00171"/>
    </source>
</evidence>
<evidence type="ECO:0000256" key="6">
    <source>
        <dbReference type="SAM" id="MobiDB-lite"/>
    </source>
</evidence>
<evidence type="ECO:0000269" key="7">
    <source>
    </source>
</evidence>
<gene>
    <name type="primary">Axin2</name>
</gene>